<keyword id="KW-0328">Glycosyltransferase</keyword>
<keyword id="KW-0441">Lipid A biosynthesis</keyword>
<keyword id="KW-0444">Lipid biosynthesis</keyword>
<keyword id="KW-0443">Lipid metabolism</keyword>
<keyword id="KW-0808">Transferase</keyword>
<comment type="function">
    <text evidence="1">Condensation of UDP-2,3-diacylglucosamine and 2,3-diacylglucosamine-1-phosphate to form lipid A disaccharide, a precursor of lipid A, a phosphorylated glycolipid that anchors the lipopolysaccharide to the outer membrane of the cell.</text>
</comment>
<comment type="catalytic activity">
    <reaction evidence="1">
        <text>a lipid X + a UDP-2-N,3-O-bis[(3R)-3-hydroxyacyl]-alpha-D-glucosamine = a lipid A disaccharide + UDP + H(+)</text>
        <dbReference type="Rhea" id="RHEA:67828"/>
        <dbReference type="ChEBI" id="CHEBI:15378"/>
        <dbReference type="ChEBI" id="CHEBI:58223"/>
        <dbReference type="ChEBI" id="CHEBI:137748"/>
        <dbReference type="ChEBI" id="CHEBI:176338"/>
        <dbReference type="ChEBI" id="CHEBI:176343"/>
        <dbReference type="EC" id="2.4.1.182"/>
    </reaction>
</comment>
<comment type="pathway">
    <text evidence="1">Bacterial outer membrane biogenesis; LPS lipid A biosynthesis.</text>
</comment>
<comment type="similarity">
    <text evidence="1">Belongs to the LpxB family.</text>
</comment>
<sequence>MIKEKRLRIAMVAGELSGDLLGAGVIRELKQHLTNVEFMGVGGPQMLKEGFHSLIDISELSVMGISDVLRRYPQLYLIRERLLREWTINPPDVFIGIDYPDFNLSVEARLKKQHIKTIHLVSPKVWAWRQKRVHLIKKAVDLVLTLFPFEEAFYLQHGVSAQFIGHPLADLIEINPSCSALRKKYNYHSDDTILAVLPGSRVGEIKYMGPLFLEVMQRIAMERPHVHFIVPIACQDLYPVFFKQLHAEYDYLKIQVIQGNAREAMAISDVVLTKSGTATLEAMLLKRPMVVAFKWGILTHAIIAPQVKVPYIALPNLLAGKKLIPEFVQEKANVDSITESVLNLLDSSNQNELIKQFTDIHRTLRQNANEKAALAILRILEDSLT</sequence>
<reference key="1">
    <citation type="journal article" date="2004" name="Nat. Genet.">
        <title>Evidence in the Legionella pneumophila genome for exploitation of host cell functions and high genome plasticity.</title>
        <authorList>
            <person name="Cazalet C."/>
            <person name="Rusniok C."/>
            <person name="Brueggemann H."/>
            <person name="Zidane N."/>
            <person name="Magnier A."/>
            <person name="Ma L."/>
            <person name="Tichit M."/>
            <person name="Jarraud S."/>
            <person name="Bouchier C."/>
            <person name="Vandenesch F."/>
            <person name="Kunst F."/>
            <person name="Etienne J."/>
            <person name="Glaser P."/>
            <person name="Buchrieser C."/>
        </authorList>
    </citation>
    <scope>NUCLEOTIDE SEQUENCE [LARGE SCALE GENOMIC DNA]</scope>
    <source>
        <strain>Paris</strain>
    </source>
</reference>
<evidence type="ECO:0000255" key="1">
    <source>
        <dbReference type="HAMAP-Rule" id="MF_00392"/>
    </source>
</evidence>
<dbReference type="EC" id="2.4.1.182" evidence="1"/>
<dbReference type="EMBL" id="CR628336">
    <property type="protein sequence ID" value="CAH14167.1"/>
    <property type="molecule type" value="Genomic_DNA"/>
</dbReference>
<dbReference type="SMR" id="Q5X0T2"/>
<dbReference type="CAZy" id="GT19">
    <property type="family name" value="Glycosyltransferase Family 19"/>
</dbReference>
<dbReference type="KEGG" id="lpp:lpp3014"/>
<dbReference type="LegioList" id="lpp3014"/>
<dbReference type="HOGENOM" id="CLU_036577_3_0_6"/>
<dbReference type="UniPathway" id="UPA00973"/>
<dbReference type="GO" id="GO:0016020">
    <property type="term" value="C:membrane"/>
    <property type="evidence" value="ECO:0007669"/>
    <property type="project" value="GOC"/>
</dbReference>
<dbReference type="GO" id="GO:0008915">
    <property type="term" value="F:lipid-A-disaccharide synthase activity"/>
    <property type="evidence" value="ECO:0007669"/>
    <property type="project" value="UniProtKB-UniRule"/>
</dbReference>
<dbReference type="GO" id="GO:0005543">
    <property type="term" value="F:phospholipid binding"/>
    <property type="evidence" value="ECO:0007669"/>
    <property type="project" value="TreeGrafter"/>
</dbReference>
<dbReference type="GO" id="GO:0009245">
    <property type="term" value="P:lipid A biosynthetic process"/>
    <property type="evidence" value="ECO:0007669"/>
    <property type="project" value="UniProtKB-UniRule"/>
</dbReference>
<dbReference type="HAMAP" id="MF_00392">
    <property type="entry name" value="LpxB"/>
    <property type="match status" value="1"/>
</dbReference>
<dbReference type="InterPro" id="IPR003835">
    <property type="entry name" value="Glyco_trans_19"/>
</dbReference>
<dbReference type="NCBIfam" id="TIGR00215">
    <property type="entry name" value="lpxB"/>
    <property type="match status" value="1"/>
</dbReference>
<dbReference type="PANTHER" id="PTHR30372">
    <property type="entry name" value="LIPID-A-DISACCHARIDE SYNTHASE"/>
    <property type="match status" value="1"/>
</dbReference>
<dbReference type="PANTHER" id="PTHR30372:SF4">
    <property type="entry name" value="LIPID-A-DISACCHARIDE SYNTHASE, MITOCHONDRIAL-RELATED"/>
    <property type="match status" value="1"/>
</dbReference>
<dbReference type="Pfam" id="PF02684">
    <property type="entry name" value="LpxB"/>
    <property type="match status" value="1"/>
</dbReference>
<dbReference type="SUPFAM" id="SSF53756">
    <property type="entry name" value="UDP-Glycosyltransferase/glycogen phosphorylase"/>
    <property type="match status" value="1"/>
</dbReference>
<feature type="chain" id="PRO_0000255193" description="Lipid-A-disaccharide synthase 2">
    <location>
        <begin position="1"/>
        <end position="385"/>
    </location>
</feature>
<gene>
    <name evidence="1" type="primary">lpxB2</name>
    <name type="ordered locus">lpp3014</name>
</gene>
<protein>
    <recommendedName>
        <fullName evidence="1">Lipid-A-disaccharide synthase 2</fullName>
        <ecNumber evidence="1">2.4.1.182</ecNumber>
    </recommendedName>
</protein>
<organism>
    <name type="scientific">Legionella pneumophila (strain Paris)</name>
    <dbReference type="NCBI Taxonomy" id="297246"/>
    <lineage>
        <taxon>Bacteria</taxon>
        <taxon>Pseudomonadati</taxon>
        <taxon>Pseudomonadota</taxon>
        <taxon>Gammaproteobacteria</taxon>
        <taxon>Legionellales</taxon>
        <taxon>Legionellaceae</taxon>
        <taxon>Legionella</taxon>
    </lineage>
</organism>
<proteinExistence type="inferred from homology"/>
<accession>Q5X0T2</accession>
<name>LPXB2_LEGPA</name>